<keyword id="KW-0963">Cytoplasm</keyword>
<keyword id="KW-0489">Methyltransferase</keyword>
<keyword id="KW-0698">rRNA processing</keyword>
<keyword id="KW-0949">S-adenosyl-L-methionine</keyword>
<keyword id="KW-0808">Transferase</keyword>
<gene>
    <name evidence="1" type="primary">rsmH</name>
    <name type="synonym">mraW</name>
    <name type="ordered locus">Mmwyl1_2622</name>
</gene>
<sequence>MTKTMAEHISVMLNESVDMLVTDTNGLYVDGTFGRGGHTRLVLDRLDKGRLLGFDKDPVAIGHGKLLEQEDARFSIVQDSFANMAEHITNVFGVDRVDGVMMDLGVSSPQIDDAERGFSFMNDGPLDMRMNPDKGQSAAEWIATVSEKDMADVMYQYGEERFSRRIAKAICEYRSHTPILTTLQLSKIIAEANPAWEKGKNPATRAFQGIRIYINNELGDLEIGLEAAAQALKVGGRLAVISFHSLEDRIVKRFMKLQAKGPELPRHLPIRNAHLDIKFKTVGKAIKPSQSEVSENVRSRSAVLRVLERVSD</sequence>
<accession>A6VYK6</accession>
<name>RSMH_MARMS</name>
<protein>
    <recommendedName>
        <fullName evidence="1">Ribosomal RNA small subunit methyltransferase H</fullName>
        <ecNumber evidence="1">2.1.1.199</ecNumber>
    </recommendedName>
    <alternativeName>
        <fullName evidence="1">16S rRNA m(4)C1402 methyltransferase</fullName>
    </alternativeName>
    <alternativeName>
        <fullName evidence="1">rRNA (cytosine-N(4)-)-methyltransferase RsmH</fullName>
    </alternativeName>
</protein>
<evidence type="ECO:0000255" key="1">
    <source>
        <dbReference type="HAMAP-Rule" id="MF_01007"/>
    </source>
</evidence>
<dbReference type="EC" id="2.1.1.199" evidence="1"/>
<dbReference type="EMBL" id="CP000749">
    <property type="protein sequence ID" value="ABR71535.1"/>
    <property type="molecule type" value="Genomic_DNA"/>
</dbReference>
<dbReference type="SMR" id="A6VYK6"/>
<dbReference type="STRING" id="400668.Mmwyl1_2622"/>
<dbReference type="KEGG" id="mmw:Mmwyl1_2622"/>
<dbReference type="eggNOG" id="COG0275">
    <property type="taxonomic scope" value="Bacteria"/>
</dbReference>
<dbReference type="HOGENOM" id="CLU_038422_2_0_6"/>
<dbReference type="OrthoDB" id="9806637at2"/>
<dbReference type="GO" id="GO:0005737">
    <property type="term" value="C:cytoplasm"/>
    <property type="evidence" value="ECO:0007669"/>
    <property type="project" value="UniProtKB-SubCell"/>
</dbReference>
<dbReference type="GO" id="GO:0071424">
    <property type="term" value="F:rRNA (cytosine-N4-)-methyltransferase activity"/>
    <property type="evidence" value="ECO:0007669"/>
    <property type="project" value="UniProtKB-UniRule"/>
</dbReference>
<dbReference type="GO" id="GO:0070475">
    <property type="term" value="P:rRNA base methylation"/>
    <property type="evidence" value="ECO:0007669"/>
    <property type="project" value="UniProtKB-UniRule"/>
</dbReference>
<dbReference type="FunFam" id="1.10.150.170:FF:000001">
    <property type="entry name" value="Ribosomal RNA small subunit methyltransferase H"/>
    <property type="match status" value="1"/>
</dbReference>
<dbReference type="Gene3D" id="1.10.150.170">
    <property type="entry name" value="Putative methyltransferase TM0872, insert domain"/>
    <property type="match status" value="1"/>
</dbReference>
<dbReference type="Gene3D" id="3.40.50.150">
    <property type="entry name" value="Vaccinia Virus protein VP39"/>
    <property type="match status" value="1"/>
</dbReference>
<dbReference type="HAMAP" id="MF_01007">
    <property type="entry name" value="16SrRNA_methyltr_H"/>
    <property type="match status" value="1"/>
</dbReference>
<dbReference type="InterPro" id="IPR002903">
    <property type="entry name" value="RsmH"/>
</dbReference>
<dbReference type="InterPro" id="IPR023397">
    <property type="entry name" value="SAM-dep_MeTrfase_MraW_recog"/>
</dbReference>
<dbReference type="InterPro" id="IPR029063">
    <property type="entry name" value="SAM-dependent_MTases_sf"/>
</dbReference>
<dbReference type="NCBIfam" id="TIGR00006">
    <property type="entry name" value="16S rRNA (cytosine(1402)-N(4))-methyltransferase RsmH"/>
    <property type="match status" value="1"/>
</dbReference>
<dbReference type="PANTHER" id="PTHR11265:SF0">
    <property type="entry name" value="12S RRNA N4-METHYLCYTIDINE METHYLTRANSFERASE"/>
    <property type="match status" value="1"/>
</dbReference>
<dbReference type="PANTHER" id="PTHR11265">
    <property type="entry name" value="S-ADENOSYL-METHYLTRANSFERASE MRAW"/>
    <property type="match status" value="1"/>
</dbReference>
<dbReference type="Pfam" id="PF01795">
    <property type="entry name" value="Methyltransf_5"/>
    <property type="match status" value="1"/>
</dbReference>
<dbReference type="PIRSF" id="PIRSF004486">
    <property type="entry name" value="MraW"/>
    <property type="match status" value="1"/>
</dbReference>
<dbReference type="SUPFAM" id="SSF81799">
    <property type="entry name" value="Putative methyltransferase TM0872, insert domain"/>
    <property type="match status" value="1"/>
</dbReference>
<dbReference type="SUPFAM" id="SSF53335">
    <property type="entry name" value="S-adenosyl-L-methionine-dependent methyltransferases"/>
    <property type="match status" value="1"/>
</dbReference>
<organism>
    <name type="scientific">Marinomonas sp. (strain MWYL1)</name>
    <dbReference type="NCBI Taxonomy" id="400668"/>
    <lineage>
        <taxon>Bacteria</taxon>
        <taxon>Pseudomonadati</taxon>
        <taxon>Pseudomonadota</taxon>
        <taxon>Gammaproteobacteria</taxon>
        <taxon>Oceanospirillales</taxon>
        <taxon>Oceanospirillaceae</taxon>
        <taxon>Marinomonas</taxon>
    </lineage>
</organism>
<feature type="chain" id="PRO_0000386970" description="Ribosomal RNA small subunit methyltransferase H">
    <location>
        <begin position="1"/>
        <end position="312"/>
    </location>
</feature>
<feature type="binding site" evidence="1">
    <location>
        <begin position="36"/>
        <end position="38"/>
    </location>
    <ligand>
        <name>S-adenosyl-L-methionine</name>
        <dbReference type="ChEBI" id="CHEBI:59789"/>
    </ligand>
</feature>
<feature type="binding site" evidence="1">
    <location>
        <position position="55"/>
    </location>
    <ligand>
        <name>S-adenosyl-L-methionine</name>
        <dbReference type="ChEBI" id="CHEBI:59789"/>
    </ligand>
</feature>
<feature type="binding site" evidence="1">
    <location>
        <position position="81"/>
    </location>
    <ligand>
        <name>S-adenosyl-L-methionine</name>
        <dbReference type="ChEBI" id="CHEBI:59789"/>
    </ligand>
</feature>
<feature type="binding site" evidence="1">
    <location>
        <position position="103"/>
    </location>
    <ligand>
        <name>S-adenosyl-L-methionine</name>
        <dbReference type="ChEBI" id="CHEBI:59789"/>
    </ligand>
</feature>
<feature type="binding site" evidence="1">
    <location>
        <position position="110"/>
    </location>
    <ligand>
        <name>S-adenosyl-L-methionine</name>
        <dbReference type="ChEBI" id="CHEBI:59789"/>
    </ligand>
</feature>
<proteinExistence type="inferred from homology"/>
<comment type="function">
    <text evidence="1">Specifically methylates the N4 position of cytidine in position 1402 (C1402) of 16S rRNA.</text>
</comment>
<comment type="catalytic activity">
    <reaction evidence="1">
        <text>cytidine(1402) in 16S rRNA + S-adenosyl-L-methionine = N(4)-methylcytidine(1402) in 16S rRNA + S-adenosyl-L-homocysteine + H(+)</text>
        <dbReference type="Rhea" id="RHEA:42928"/>
        <dbReference type="Rhea" id="RHEA-COMP:10286"/>
        <dbReference type="Rhea" id="RHEA-COMP:10287"/>
        <dbReference type="ChEBI" id="CHEBI:15378"/>
        <dbReference type="ChEBI" id="CHEBI:57856"/>
        <dbReference type="ChEBI" id="CHEBI:59789"/>
        <dbReference type="ChEBI" id="CHEBI:74506"/>
        <dbReference type="ChEBI" id="CHEBI:82748"/>
        <dbReference type="EC" id="2.1.1.199"/>
    </reaction>
</comment>
<comment type="subcellular location">
    <subcellularLocation>
        <location evidence="1">Cytoplasm</location>
    </subcellularLocation>
</comment>
<comment type="similarity">
    <text evidence="1">Belongs to the methyltransferase superfamily. RsmH family.</text>
</comment>
<reference key="1">
    <citation type="submission" date="2007-06" db="EMBL/GenBank/DDBJ databases">
        <title>Complete sequence of Marinomonas sp. MWYL1.</title>
        <authorList>
            <consortium name="US DOE Joint Genome Institute"/>
            <person name="Copeland A."/>
            <person name="Lucas S."/>
            <person name="Lapidus A."/>
            <person name="Barry K."/>
            <person name="Glavina del Rio T."/>
            <person name="Dalin E."/>
            <person name="Tice H."/>
            <person name="Pitluck S."/>
            <person name="Kiss H."/>
            <person name="Brettin T."/>
            <person name="Bruce D."/>
            <person name="Detter J.C."/>
            <person name="Han C."/>
            <person name="Schmutz J."/>
            <person name="Larimer F."/>
            <person name="Land M."/>
            <person name="Hauser L."/>
            <person name="Kyrpides N."/>
            <person name="Kim E."/>
            <person name="Johnston A.W.B."/>
            <person name="Todd J.D."/>
            <person name="Rogers R."/>
            <person name="Wexler M."/>
            <person name="Bond P.L."/>
            <person name="Li Y."/>
            <person name="Richardson P."/>
        </authorList>
    </citation>
    <scope>NUCLEOTIDE SEQUENCE [LARGE SCALE GENOMIC DNA]</scope>
    <source>
        <strain>MWYL1</strain>
    </source>
</reference>